<feature type="chain" id="PRO_5000397759" description="NADH-quinone oxidoreductase subunit K">
    <location>
        <begin position="1"/>
        <end position="100"/>
    </location>
</feature>
<feature type="transmembrane region" description="Helical" evidence="1">
    <location>
        <begin position="4"/>
        <end position="24"/>
    </location>
</feature>
<feature type="transmembrane region" description="Helical" evidence="1">
    <location>
        <begin position="28"/>
        <end position="48"/>
    </location>
</feature>
<feature type="transmembrane region" description="Helical" evidence="1">
    <location>
        <begin position="60"/>
        <end position="80"/>
    </location>
</feature>
<accession>B5R300</accession>
<proteinExistence type="inferred from homology"/>
<comment type="function">
    <text evidence="1">NDH-1 shuttles electrons from NADH, via FMN and iron-sulfur (Fe-S) centers, to quinones in the respiratory chain. The immediate electron acceptor for the enzyme in this species is believed to be ubiquinone. Couples the redox reaction to proton translocation (for every two electrons transferred, four hydrogen ions are translocated across the cytoplasmic membrane), and thus conserves the redox energy in a proton gradient.</text>
</comment>
<comment type="catalytic activity">
    <reaction evidence="1">
        <text>a quinone + NADH + 5 H(+)(in) = a quinol + NAD(+) + 4 H(+)(out)</text>
        <dbReference type="Rhea" id="RHEA:57888"/>
        <dbReference type="ChEBI" id="CHEBI:15378"/>
        <dbReference type="ChEBI" id="CHEBI:24646"/>
        <dbReference type="ChEBI" id="CHEBI:57540"/>
        <dbReference type="ChEBI" id="CHEBI:57945"/>
        <dbReference type="ChEBI" id="CHEBI:132124"/>
    </reaction>
</comment>
<comment type="subunit">
    <text evidence="1">NDH-1 is composed of 13 different subunits. Subunits NuoA, H, J, K, L, M, N constitute the membrane sector of the complex.</text>
</comment>
<comment type="subcellular location">
    <subcellularLocation>
        <location evidence="1">Cell inner membrane</location>
        <topology evidence="1">Multi-pass membrane protein</topology>
    </subcellularLocation>
</comment>
<comment type="similarity">
    <text evidence="1">Belongs to the complex I subunit 4L family.</text>
</comment>
<reference key="1">
    <citation type="journal article" date="2008" name="Genome Res.">
        <title>Comparative genome analysis of Salmonella enteritidis PT4 and Salmonella gallinarum 287/91 provides insights into evolutionary and host adaptation pathways.</title>
        <authorList>
            <person name="Thomson N.R."/>
            <person name="Clayton D.J."/>
            <person name="Windhorst D."/>
            <person name="Vernikos G."/>
            <person name="Davidson S."/>
            <person name="Churcher C."/>
            <person name="Quail M.A."/>
            <person name="Stevens M."/>
            <person name="Jones M.A."/>
            <person name="Watson M."/>
            <person name="Barron A."/>
            <person name="Layton A."/>
            <person name="Pickard D."/>
            <person name="Kingsley R.A."/>
            <person name="Bignell A."/>
            <person name="Clark L."/>
            <person name="Harris B."/>
            <person name="Ormond D."/>
            <person name="Abdellah Z."/>
            <person name="Brooks K."/>
            <person name="Cherevach I."/>
            <person name="Chillingworth T."/>
            <person name="Woodward J."/>
            <person name="Norberczak H."/>
            <person name="Lord A."/>
            <person name="Arrowsmith C."/>
            <person name="Jagels K."/>
            <person name="Moule S."/>
            <person name="Mungall K."/>
            <person name="Saunders M."/>
            <person name="Whitehead S."/>
            <person name="Chabalgoity J.A."/>
            <person name="Maskell D."/>
            <person name="Humphreys T."/>
            <person name="Roberts M."/>
            <person name="Barrow P.A."/>
            <person name="Dougan G."/>
            <person name="Parkhill J."/>
        </authorList>
    </citation>
    <scope>NUCLEOTIDE SEQUENCE [LARGE SCALE GENOMIC DNA]</scope>
    <source>
        <strain>P125109</strain>
    </source>
</reference>
<sequence length="100" mass="10818">MIPLTHGLILAAILFVLGLTGLVIRRNLLFMLIGLEIMINASALAFVVAGSYWGQTDGQVMYILAISLAAAEASIGLALLLQLHRRRQNLNIDSVSEMRG</sequence>
<name>NUOK_SALEP</name>
<protein>
    <recommendedName>
        <fullName evidence="1">NADH-quinone oxidoreductase subunit K</fullName>
        <ecNumber evidence="1">7.1.1.-</ecNumber>
    </recommendedName>
    <alternativeName>
        <fullName evidence="1">NADH dehydrogenase I subunit K</fullName>
    </alternativeName>
    <alternativeName>
        <fullName evidence="1">NDH-1 subunit K</fullName>
    </alternativeName>
</protein>
<gene>
    <name evidence="1" type="primary">nuoK</name>
    <name type="ordered locus">SEN2301</name>
</gene>
<dbReference type="EC" id="7.1.1.-" evidence="1"/>
<dbReference type="EMBL" id="AM933172">
    <property type="protein sequence ID" value="CAR33885.1"/>
    <property type="molecule type" value="Genomic_DNA"/>
</dbReference>
<dbReference type="RefSeq" id="WP_000612687.1">
    <property type="nucleotide sequence ID" value="NC_011294.1"/>
</dbReference>
<dbReference type="SMR" id="B5R300"/>
<dbReference type="KEGG" id="set:SEN2301"/>
<dbReference type="HOGENOM" id="CLU_144724_0_1_6"/>
<dbReference type="Proteomes" id="UP000000613">
    <property type="component" value="Chromosome"/>
</dbReference>
<dbReference type="GO" id="GO:0030964">
    <property type="term" value="C:NADH dehydrogenase complex"/>
    <property type="evidence" value="ECO:0007669"/>
    <property type="project" value="TreeGrafter"/>
</dbReference>
<dbReference type="GO" id="GO:0005886">
    <property type="term" value="C:plasma membrane"/>
    <property type="evidence" value="ECO:0007669"/>
    <property type="project" value="UniProtKB-SubCell"/>
</dbReference>
<dbReference type="GO" id="GO:0050136">
    <property type="term" value="F:NADH:ubiquinone reductase (non-electrogenic) activity"/>
    <property type="evidence" value="ECO:0007669"/>
    <property type="project" value="UniProtKB-UniRule"/>
</dbReference>
<dbReference type="GO" id="GO:0048038">
    <property type="term" value="F:quinone binding"/>
    <property type="evidence" value="ECO:0007669"/>
    <property type="project" value="UniProtKB-KW"/>
</dbReference>
<dbReference type="GO" id="GO:0042773">
    <property type="term" value="P:ATP synthesis coupled electron transport"/>
    <property type="evidence" value="ECO:0007669"/>
    <property type="project" value="InterPro"/>
</dbReference>
<dbReference type="FunFam" id="1.10.287.3510:FF:000001">
    <property type="entry name" value="NADH-quinone oxidoreductase subunit K"/>
    <property type="match status" value="1"/>
</dbReference>
<dbReference type="Gene3D" id="1.10.287.3510">
    <property type="match status" value="1"/>
</dbReference>
<dbReference type="HAMAP" id="MF_01456">
    <property type="entry name" value="NDH1_NuoK"/>
    <property type="match status" value="1"/>
</dbReference>
<dbReference type="InterPro" id="IPR001133">
    <property type="entry name" value="NADH_UbQ_OxRdtase_chain4L/K"/>
</dbReference>
<dbReference type="InterPro" id="IPR039428">
    <property type="entry name" value="NUOK/Mnh_C1-like"/>
</dbReference>
<dbReference type="NCBIfam" id="NF004319">
    <property type="entry name" value="PRK05715.1-1"/>
    <property type="match status" value="1"/>
</dbReference>
<dbReference type="NCBIfam" id="NF004320">
    <property type="entry name" value="PRK05715.1-2"/>
    <property type="match status" value="1"/>
</dbReference>
<dbReference type="PANTHER" id="PTHR11434:SF16">
    <property type="entry name" value="NADH-UBIQUINONE OXIDOREDUCTASE CHAIN 4L"/>
    <property type="match status" value="1"/>
</dbReference>
<dbReference type="PANTHER" id="PTHR11434">
    <property type="entry name" value="NADH-UBIQUINONE OXIDOREDUCTASE SUBUNIT ND4L"/>
    <property type="match status" value="1"/>
</dbReference>
<dbReference type="Pfam" id="PF00420">
    <property type="entry name" value="Oxidored_q2"/>
    <property type="match status" value="1"/>
</dbReference>
<evidence type="ECO:0000255" key="1">
    <source>
        <dbReference type="HAMAP-Rule" id="MF_01456"/>
    </source>
</evidence>
<keyword id="KW-0997">Cell inner membrane</keyword>
<keyword id="KW-1003">Cell membrane</keyword>
<keyword id="KW-0472">Membrane</keyword>
<keyword id="KW-0520">NAD</keyword>
<keyword id="KW-0874">Quinone</keyword>
<keyword id="KW-1278">Translocase</keyword>
<keyword id="KW-0812">Transmembrane</keyword>
<keyword id="KW-1133">Transmembrane helix</keyword>
<keyword id="KW-0813">Transport</keyword>
<keyword id="KW-0830">Ubiquinone</keyword>
<organism>
    <name type="scientific">Salmonella enteritidis PT4 (strain P125109)</name>
    <dbReference type="NCBI Taxonomy" id="550537"/>
    <lineage>
        <taxon>Bacteria</taxon>
        <taxon>Pseudomonadati</taxon>
        <taxon>Pseudomonadota</taxon>
        <taxon>Gammaproteobacteria</taxon>
        <taxon>Enterobacterales</taxon>
        <taxon>Enterobacteriaceae</taxon>
        <taxon>Salmonella</taxon>
    </lineage>
</organism>